<accession>B1P1I2</accession>
<sequence length="116" mass="12733">MKLCVLTIATLLVTATSLETQKEIAEGNELTREETPSLVEHKEDEAAAASEKRSCIEEWKTCENSCECCGSSTICSSTWAEGKEIKLCKNEGGTFKKVLHFIQKGISKLKSCKEGN</sequence>
<reference key="1">
    <citation type="journal article" date="2008" name="Cell. Mol. Life Sci.">
        <title>Molecular diversity and evolution of cystine knot toxins of the tarantula Chilobrachys jingzhao.</title>
        <authorList>
            <person name="Chen J."/>
            <person name="Deng M."/>
            <person name="He Q."/>
            <person name="Meng E."/>
            <person name="Jiang L."/>
            <person name="Liao Z."/>
            <person name="Rong M."/>
            <person name="Liang S."/>
        </authorList>
    </citation>
    <scope>NUCLEOTIDE SEQUENCE [LARGE SCALE MRNA]</scope>
    <source>
        <tissue>Venom gland</tissue>
    </source>
</reference>
<reference key="2">
    <citation type="journal article" date="2007" name="Proteomics">
        <title>Proteomic and peptidomic analysis of the venom from Chinese tarantula Chilobrachys jingzhao.</title>
        <authorList>
            <person name="Liao Z."/>
            <person name="Cao J."/>
            <person name="Li S."/>
            <person name="Yan X."/>
            <person name="Hu W."/>
            <person name="He Q."/>
            <person name="Chen J."/>
            <person name="Tang J."/>
            <person name="Xie J."/>
            <person name="Liang S."/>
        </authorList>
    </citation>
    <scope>PROTEIN SEQUENCE OF 54-65</scope>
    <scope>IDENTIFICATION BY MASS SPECTROMETRY</scope>
    <source>
        <tissue>Venom</tissue>
    </source>
</reference>
<proteinExistence type="evidence at protein level"/>
<feature type="signal peptide" evidence="1">
    <location>
        <begin position="1"/>
        <end position="17"/>
    </location>
</feature>
<feature type="propeptide" id="PRO_0000398540" evidence="3">
    <location>
        <begin position="18"/>
        <end position="53"/>
    </location>
</feature>
<feature type="peptide" id="PRO_0000398541" description="U30-theraphotoxin-Cg1b">
    <location>
        <begin position="54"/>
        <end position="116"/>
    </location>
</feature>
<feature type="region of interest" description="Disordered" evidence="2">
    <location>
        <begin position="25"/>
        <end position="45"/>
    </location>
</feature>
<feature type="disulfide bond" evidence="4">
    <location>
        <begin position="55"/>
        <end position="69"/>
    </location>
</feature>
<feature type="disulfide bond" evidence="4">
    <location>
        <begin position="62"/>
        <end position="75"/>
    </location>
</feature>
<feature type="disulfide bond" evidence="4">
    <location>
        <begin position="66"/>
        <end position="112"/>
    </location>
</feature>
<feature type="disulfide bond" evidence="4">
    <location>
        <begin position="68"/>
        <end position="88"/>
    </location>
</feature>
<dbReference type="EMBL" id="EU233913">
    <property type="protein sequence ID" value="ABY71732.1"/>
    <property type="molecule type" value="mRNA"/>
</dbReference>
<dbReference type="ArachnoServer" id="AS000861">
    <property type="toxin name" value="U30-theraphotoxin-Cg1b"/>
</dbReference>
<dbReference type="GO" id="GO:0005576">
    <property type="term" value="C:extracellular region"/>
    <property type="evidence" value="ECO:0007669"/>
    <property type="project" value="UniProtKB-SubCell"/>
</dbReference>
<dbReference type="GO" id="GO:0099106">
    <property type="term" value="F:ion channel regulator activity"/>
    <property type="evidence" value="ECO:0007669"/>
    <property type="project" value="UniProtKB-KW"/>
</dbReference>
<dbReference type="GO" id="GO:0090729">
    <property type="term" value="F:toxin activity"/>
    <property type="evidence" value="ECO:0007669"/>
    <property type="project" value="UniProtKB-KW"/>
</dbReference>
<comment type="function">
    <text>Probable ion channel inhibitor.</text>
</comment>
<comment type="subcellular location">
    <subcellularLocation>
        <location>Secreted</location>
    </subcellularLocation>
</comment>
<comment type="tissue specificity">
    <text>Expressed by the venom gland.</text>
</comment>
<comment type="domain">
    <text evidence="4">The presence of a 'disulfide through disulfide knot' structurally defines this protein as a knottin.</text>
</comment>
<comment type="similarity">
    <text evidence="4">Belongs to the neurotoxin 03 (Tx2) family. 02 subfamily.</text>
</comment>
<protein>
    <recommendedName>
        <fullName>U30-theraphotoxin-Cg1b</fullName>
        <shortName>U30-TRTX-Cg1b</shortName>
    </recommendedName>
    <alternativeName>
        <fullName>Jingzhaotoxin-63</fullName>
        <shortName>JZTX-63</shortName>
    </alternativeName>
    <alternativeName>
        <fullName>Peptide F5-9.19</fullName>
    </alternativeName>
</protein>
<organism>
    <name type="scientific">Chilobrachys guangxiensis</name>
    <name type="common">Chinese earth tiger tarantula</name>
    <name type="synonym">Chilobrachys jingzhao</name>
    <dbReference type="NCBI Taxonomy" id="278060"/>
    <lineage>
        <taxon>Eukaryota</taxon>
        <taxon>Metazoa</taxon>
        <taxon>Ecdysozoa</taxon>
        <taxon>Arthropoda</taxon>
        <taxon>Chelicerata</taxon>
        <taxon>Arachnida</taxon>
        <taxon>Araneae</taxon>
        <taxon>Mygalomorphae</taxon>
        <taxon>Theraphosidae</taxon>
        <taxon>Chilobrachys</taxon>
    </lineage>
</organism>
<keyword id="KW-0903">Direct protein sequencing</keyword>
<keyword id="KW-1015">Disulfide bond</keyword>
<keyword id="KW-0872">Ion channel impairing toxin</keyword>
<keyword id="KW-0960">Knottin</keyword>
<keyword id="KW-0964">Secreted</keyword>
<keyword id="KW-0732">Signal</keyword>
<keyword id="KW-0800">Toxin</keyword>
<evidence type="ECO:0000255" key="1"/>
<evidence type="ECO:0000256" key="2">
    <source>
        <dbReference type="SAM" id="MobiDB-lite"/>
    </source>
</evidence>
<evidence type="ECO:0000269" key="3">
    <source>
    </source>
</evidence>
<evidence type="ECO:0000305" key="4"/>
<name>TX32B_CHIGU</name>